<gene>
    <name type="primary">fabF</name>
    <name type="ordered locus">c1365</name>
</gene>
<keyword id="KW-0012">Acyltransferase</keyword>
<keyword id="KW-0275">Fatty acid biosynthesis</keyword>
<keyword id="KW-0276">Fatty acid metabolism</keyword>
<keyword id="KW-0444">Lipid biosynthesis</keyword>
<keyword id="KW-0443">Lipid metabolism</keyword>
<keyword id="KW-1185">Reference proteome</keyword>
<keyword id="KW-0808">Transferase</keyword>
<proteinExistence type="inferred from homology"/>
<name>FABF_ECOL6</name>
<accession>P0AAI6</accession>
<accession>P39435</accession>
<organism>
    <name type="scientific">Escherichia coli O6:H1 (strain CFT073 / ATCC 700928 / UPEC)</name>
    <dbReference type="NCBI Taxonomy" id="199310"/>
    <lineage>
        <taxon>Bacteria</taxon>
        <taxon>Pseudomonadati</taxon>
        <taxon>Pseudomonadota</taxon>
        <taxon>Gammaproteobacteria</taxon>
        <taxon>Enterobacterales</taxon>
        <taxon>Enterobacteriaceae</taxon>
        <taxon>Escherichia</taxon>
    </lineage>
</organism>
<sequence length="413" mass="43046">MSKRRVVVTGLGMLSPVGNTVESTWKALLAGQSGISLIDHFDTSAYATKFAGLVKDFNCEDIISRKEQRKMDAFIQYGIVAGVQAMQDSGLEITEENATRIGAAIGSGIGGLGLIEENHTSLMNGGPRKISPFFVPSTIVNMVAGHLTIMYGLRGPSISIATACTSGVHNIGHAARIIAYGDADVMVAGGAEKASTPLGVGGFGAARALSTRNDNPQAASRPWDKERDGFVLGDGAGMLVLEEYEHAKKRGAKIYAELVGFGMSSDAYHMTSPPENGAGAALAMANALRDAGIEASQIGYVNAHGTSTPAGDKAEAQAVKTIFGEAASRVLVSSTKSMTGHLLGAAGAVESIYSILALRDQAVPPTINLDNPDEGCDLDFVPHEARQVSGMEYTLCNSFGFGGTNGSLIFKKI</sequence>
<feature type="initiator methionine" description="Removed" evidence="1">
    <location>
        <position position="1"/>
    </location>
</feature>
<feature type="chain" id="PRO_0000180316" description="3-oxoacyl-[acyl-carrier-protein] synthase 2">
    <location>
        <begin position="2"/>
        <end position="413"/>
    </location>
</feature>
<feature type="domain" description="Ketosynthase family 3 (KS3)" evidence="3">
    <location>
        <begin position="3"/>
        <end position="412"/>
    </location>
</feature>
<feature type="active site" description="For beta-ketoacyl synthase activity" evidence="3">
    <location>
        <position position="164"/>
    </location>
</feature>
<feature type="active site" description="For beta-ketoacyl synthase activity" evidence="3">
    <location>
        <position position="304"/>
    </location>
</feature>
<feature type="active site" description="For beta-ketoacyl synthase activity" evidence="3">
    <location>
        <position position="341"/>
    </location>
</feature>
<dbReference type="EC" id="2.3.1.179" evidence="2"/>
<dbReference type="EMBL" id="AE014075">
    <property type="protein sequence ID" value="AAN79835.1"/>
    <property type="molecule type" value="Genomic_DNA"/>
</dbReference>
<dbReference type="RefSeq" id="WP_000044679.1">
    <property type="nucleotide sequence ID" value="NZ_CP051263.1"/>
</dbReference>
<dbReference type="SMR" id="P0AAI6"/>
<dbReference type="STRING" id="199310.c1365"/>
<dbReference type="GeneID" id="86945966"/>
<dbReference type="KEGG" id="ecc:c1365"/>
<dbReference type="eggNOG" id="COG0304">
    <property type="taxonomic scope" value="Bacteria"/>
</dbReference>
<dbReference type="HOGENOM" id="CLU_000022_69_2_6"/>
<dbReference type="BioCyc" id="ECOL199310:C1365-MONOMER"/>
<dbReference type="UniPathway" id="UPA00094"/>
<dbReference type="Proteomes" id="UP000001410">
    <property type="component" value="Chromosome"/>
</dbReference>
<dbReference type="GO" id="GO:0005829">
    <property type="term" value="C:cytosol"/>
    <property type="evidence" value="ECO:0007669"/>
    <property type="project" value="TreeGrafter"/>
</dbReference>
<dbReference type="GO" id="GO:0004315">
    <property type="term" value="F:3-oxoacyl-[acyl-carrier-protein] synthase activity"/>
    <property type="evidence" value="ECO:0007669"/>
    <property type="project" value="UniProtKB-EC"/>
</dbReference>
<dbReference type="GO" id="GO:0006633">
    <property type="term" value="P:fatty acid biosynthetic process"/>
    <property type="evidence" value="ECO:0007669"/>
    <property type="project" value="UniProtKB-UniPathway"/>
</dbReference>
<dbReference type="CDD" id="cd00834">
    <property type="entry name" value="KAS_I_II"/>
    <property type="match status" value="1"/>
</dbReference>
<dbReference type="FunFam" id="3.40.47.10:FF:000009">
    <property type="entry name" value="3-oxoacyl-[acyl-carrier-protein] synthase 2"/>
    <property type="match status" value="1"/>
</dbReference>
<dbReference type="Gene3D" id="3.40.47.10">
    <property type="match status" value="1"/>
</dbReference>
<dbReference type="InterPro" id="IPR017568">
    <property type="entry name" value="3-oxoacyl-ACP_synth-2"/>
</dbReference>
<dbReference type="InterPro" id="IPR000794">
    <property type="entry name" value="Beta-ketoacyl_synthase"/>
</dbReference>
<dbReference type="InterPro" id="IPR018201">
    <property type="entry name" value="Ketoacyl_synth_AS"/>
</dbReference>
<dbReference type="InterPro" id="IPR014031">
    <property type="entry name" value="Ketoacyl_synth_C"/>
</dbReference>
<dbReference type="InterPro" id="IPR014030">
    <property type="entry name" value="Ketoacyl_synth_N"/>
</dbReference>
<dbReference type="InterPro" id="IPR020841">
    <property type="entry name" value="PKS_Beta-ketoAc_synthase_dom"/>
</dbReference>
<dbReference type="InterPro" id="IPR016039">
    <property type="entry name" value="Thiolase-like"/>
</dbReference>
<dbReference type="NCBIfam" id="TIGR03150">
    <property type="entry name" value="fabF"/>
    <property type="match status" value="1"/>
</dbReference>
<dbReference type="NCBIfam" id="NF004970">
    <property type="entry name" value="PRK06333.1"/>
    <property type="match status" value="1"/>
</dbReference>
<dbReference type="NCBIfam" id="NF005589">
    <property type="entry name" value="PRK07314.1"/>
    <property type="match status" value="1"/>
</dbReference>
<dbReference type="NCBIfam" id="NF006434">
    <property type="entry name" value="PRK08722.1"/>
    <property type="match status" value="1"/>
</dbReference>
<dbReference type="PANTHER" id="PTHR11712:SF336">
    <property type="entry name" value="3-OXOACYL-[ACYL-CARRIER-PROTEIN] SYNTHASE, MITOCHONDRIAL"/>
    <property type="match status" value="1"/>
</dbReference>
<dbReference type="PANTHER" id="PTHR11712">
    <property type="entry name" value="POLYKETIDE SYNTHASE-RELATED"/>
    <property type="match status" value="1"/>
</dbReference>
<dbReference type="Pfam" id="PF00109">
    <property type="entry name" value="ketoacyl-synt"/>
    <property type="match status" value="1"/>
</dbReference>
<dbReference type="Pfam" id="PF02801">
    <property type="entry name" value="Ketoacyl-synt_C"/>
    <property type="match status" value="1"/>
</dbReference>
<dbReference type="PIRSF" id="PIRSF000447">
    <property type="entry name" value="KAS_II"/>
    <property type="match status" value="1"/>
</dbReference>
<dbReference type="SMART" id="SM00825">
    <property type="entry name" value="PKS_KS"/>
    <property type="match status" value="1"/>
</dbReference>
<dbReference type="SUPFAM" id="SSF53901">
    <property type="entry name" value="Thiolase-like"/>
    <property type="match status" value="2"/>
</dbReference>
<dbReference type="PROSITE" id="PS00606">
    <property type="entry name" value="KS3_1"/>
    <property type="match status" value="1"/>
</dbReference>
<dbReference type="PROSITE" id="PS52004">
    <property type="entry name" value="KS3_2"/>
    <property type="match status" value="1"/>
</dbReference>
<reference key="1">
    <citation type="journal article" date="2002" name="Proc. Natl. Acad. Sci. U.S.A.">
        <title>Extensive mosaic structure revealed by the complete genome sequence of uropathogenic Escherichia coli.</title>
        <authorList>
            <person name="Welch R.A."/>
            <person name="Burland V."/>
            <person name="Plunkett G. III"/>
            <person name="Redford P."/>
            <person name="Roesch P."/>
            <person name="Rasko D."/>
            <person name="Buckles E.L."/>
            <person name="Liou S.-R."/>
            <person name="Boutin A."/>
            <person name="Hackett J."/>
            <person name="Stroud D."/>
            <person name="Mayhew G.F."/>
            <person name="Rose D.J."/>
            <person name="Zhou S."/>
            <person name="Schwartz D.C."/>
            <person name="Perna N.T."/>
            <person name="Mobley H.L.T."/>
            <person name="Donnenberg M.S."/>
            <person name="Blattner F.R."/>
        </authorList>
    </citation>
    <scope>NUCLEOTIDE SEQUENCE [LARGE SCALE GENOMIC DNA]</scope>
    <source>
        <strain>CFT073 / ATCC 700928 / UPEC</strain>
    </source>
</reference>
<comment type="function">
    <text evidence="2">Involved in the type II fatty acid elongation cycle. Catalyzes the elongation of a wide range of acyl-ACP by the addition of two carbons from malonyl-ACP to an acyl acceptor. Can efficiently catalyze the conversion of palmitoleoyl-ACP (cis-hexadec-9-enoyl-ACP) to cis-vaccenoyl-ACP (cis-octadec-11-enoyl-ACP), an essential step in the thermal regulation of fatty acid composition.</text>
</comment>
<comment type="catalytic activity">
    <reaction evidence="2">
        <text>a fatty acyl-[ACP] + malonyl-[ACP] + H(+) = a 3-oxoacyl-[ACP] + holo-[ACP] + CO2</text>
        <dbReference type="Rhea" id="RHEA:22836"/>
        <dbReference type="Rhea" id="RHEA-COMP:9623"/>
        <dbReference type="Rhea" id="RHEA-COMP:9685"/>
        <dbReference type="Rhea" id="RHEA-COMP:9916"/>
        <dbReference type="Rhea" id="RHEA-COMP:14125"/>
        <dbReference type="ChEBI" id="CHEBI:15378"/>
        <dbReference type="ChEBI" id="CHEBI:16526"/>
        <dbReference type="ChEBI" id="CHEBI:64479"/>
        <dbReference type="ChEBI" id="CHEBI:78449"/>
        <dbReference type="ChEBI" id="CHEBI:78776"/>
        <dbReference type="ChEBI" id="CHEBI:138651"/>
    </reaction>
</comment>
<comment type="catalytic activity">
    <reaction evidence="2">
        <text>(9Z)-hexadecenoyl-[ACP] + malonyl-[ACP] + H(+) = 3-oxo-(11Z)-octadecenoyl-[ACP] + holo-[ACP] + CO2</text>
        <dbReference type="Rhea" id="RHEA:55040"/>
        <dbReference type="Rhea" id="RHEA-COMP:9623"/>
        <dbReference type="Rhea" id="RHEA-COMP:9685"/>
        <dbReference type="Rhea" id="RHEA-COMP:10800"/>
        <dbReference type="Rhea" id="RHEA-COMP:14074"/>
        <dbReference type="ChEBI" id="CHEBI:15378"/>
        <dbReference type="ChEBI" id="CHEBI:16526"/>
        <dbReference type="ChEBI" id="CHEBI:64479"/>
        <dbReference type="ChEBI" id="CHEBI:78449"/>
        <dbReference type="ChEBI" id="CHEBI:83989"/>
        <dbReference type="ChEBI" id="CHEBI:138538"/>
        <dbReference type="EC" id="2.3.1.179"/>
    </reaction>
</comment>
<comment type="pathway">
    <text evidence="2">Lipid metabolism; fatty acid biosynthesis.</text>
</comment>
<comment type="subunit">
    <text evidence="2">Homodimer.</text>
</comment>
<comment type="similarity">
    <text evidence="4">Belongs to the thiolase-like superfamily. Beta-ketoacyl-ACP synthases family.</text>
</comment>
<protein>
    <recommendedName>
        <fullName>3-oxoacyl-[acyl-carrier-protein] synthase 2</fullName>
        <ecNumber evidence="2">2.3.1.179</ecNumber>
    </recommendedName>
    <alternativeName>
        <fullName>3-oxoacyl-[acyl-carrier-protein] synthase II</fullName>
    </alternativeName>
    <alternativeName>
        <fullName>Beta-ketoacyl-ACP synthase II</fullName>
        <shortName>KAS II</shortName>
    </alternativeName>
</protein>
<evidence type="ECO:0000250" key="1"/>
<evidence type="ECO:0000250" key="2">
    <source>
        <dbReference type="UniProtKB" id="P0AAI5"/>
    </source>
</evidence>
<evidence type="ECO:0000255" key="3">
    <source>
        <dbReference type="PROSITE-ProRule" id="PRU01348"/>
    </source>
</evidence>
<evidence type="ECO:0000305" key="4"/>